<name>RTP1_SCHPO</name>
<protein>
    <recommendedName>
        <fullName evidence="1">RNA polymerase II assembly factor rtp1</fullName>
    </recommendedName>
</protein>
<feature type="chain" id="PRO_0000372364" description="RNA polymerase II assembly factor rtp1">
    <location>
        <begin position="1"/>
        <end position="747"/>
    </location>
</feature>
<feature type="repeat" description="HEAT 1" evidence="2">
    <location>
        <begin position="37"/>
        <end position="75"/>
    </location>
</feature>
<feature type="repeat" description="HEAT 2" evidence="2">
    <location>
        <begin position="103"/>
        <end position="141"/>
    </location>
</feature>
<feature type="repeat" description="HEAT 3" evidence="2">
    <location>
        <begin position="320"/>
        <end position="358"/>
    </location>
</feature>
<feature type="repeat" description="HEAT 4" evidence="2">
    <location>
        <begin position="381"/>
        <end position="418"/>
    </location>
</feature>
<feature type="repeat" description="HEAT 5" evidence="2">
    <location>
        <begin position="459"/>
        <end position="485"/>
    </location>
</feature>
<feature type="repeat" description="HEAT 6" evidence="2">
    <location>
        <begin position="486"/>
        <end position="523"/>
    </location>
</feature>
<feature type="repeat" description="HEAT 7" evidence="2">
    <location>
        <begin position="557"/>
        <end position="594"/>
    </location>
</feature>
<evidence type="ECO:0000250" key="1">
    <source>
        <dbReference type="UniProtKB" id="Q12751"/>
    </source>
</evidence>
<evidence type="ECO:0000255" key="2"/>
<evidence type="ECO:0000269" key="3">
    <source>
    </source>
</evidence>
<evidence type="ECO:0000305" key="4"/>
<evidence type="ECO:0000312" key="5">
    <source>
        <dbReference type="PomBase" id="SPBC20F10.08c"/>
    </source>
</evidence>
<sequence length="747" mass="84837">MDANQKLLDFAKLLNQKNDSRPVIEKLKDNISGDLLNYFLNLLEEISKLDTDQPLSVTSLRCLQLFVHLTFLLGVYTQLPKEMLSQAKIKALPIYTPKKNLVQIYNILLPLLLTPSLLQGPLNLHYADLLLLHLYLLNCHEQGSLIEEPRPLFLDPSWKEKVTSIMSPQMVDPSKMISSCLSLLQPNVDNWLQDKLKHYLTTCLCRETGVQGFLKVYMQAQPNSIERARQAAHLISSVPKDISPQKYFSCILPQVWSLFSTQPRLASQLIIAVTNTHCDIVTSFLLKKLQILEAPKVIDLSPFENALDVLQVLVYIQNDDIIRICESCVPSLLHLQENTTLRSKVQDILLRIISVCGTKSLLRNLTNAKHLRIFCERLTKSQLAMFLPNLLEIWVQQPPDKRLELLELVQYALSNVDSDEIPSNVMLSVCTNLINEVASQNKYSSTEISQITTNREVEEENEEILLVLLNIISSVIGRNAELDLENPISSLLPALEQLSNYSNREISDLAKDVYKTLIQSKDDYSLALSYTQSDLVPVRGQGVYMLRKLIEKKDDRINPVRVLHVLINLLRDENSYVHLNVISAVVSLCDKYDDSLIRLLKEYTNTNKFTVDETLLIGQAIYQTMERQGELVAKFYGQIEQTCLSMLNNENTDIKISSLNIARLLCQMTSSDAFIESAKNILILEMGSDKQFLRRAAVQLLDSCKHLPDSVITTLSYVGSHDKDDFIKESCLNILANQADAAKYYLQ</sequence>
<comment type="function">
    <text evidence="1">Required for the cytoplasmic assembly and the nuclear import of RNA polymerase II.</text>
</comment>
<comment type="subunit">
    <text evidence="1">Interacts with RNA polymerase II subunits. Interacts with nuclear pore complex subunits.</text>
</comment>
<comment type="subcellular location">
    <subcellularLocation>
        <location evidence="3">Cytoplasm</location>
    </subcellularLocation>
    <subcellularLocation>
        <location evidence="3">Nucleus</location>
    </subcellularLocation>
</comment>
<comment type="similarity">
    <text evidence="4">Belongs to the Tango6 family.</text>
</comment>
<reference key="1">
    <citation type="journal article" date="2002" name="Nature">
        <title>The genome sequence of Schizosaccharomyces pombe.</title>
        <authorList>
            <person name="Wood V."/>
            <person name="Gwilliam R."/>
            <person name="Rajandream M.A."/>
            <person name="Lyne M.H."/>
            <person name="Lyne R."/>
            <person name="Stewart A."/>
            <person name="Sgouros J.G."/>
            <person name="Peat N."/>
            <person name="Hayles J."/>
            <person name="Baker S.G."/>
            <person name="Basham D."/>
            <person name="Bowman S."/>
            <person name="Brooks K."/>
            <person name="Brown D."/>
            <person name="Brown S."/>
            <person name="Chillingworth T."/>
            <person name="Churcher C.M."/>
            <person name="Collins M."/>
            <person name="Connor R."/>
            <person name="Cronin A."/>
            <person name="Davis P."/>
            <person name="Feltwell T."/>
            <person name="Fraser A."/>
            <person name="Gentles S."/>
            <person name="Goble A."/>
            <person name="Hamlin N."/>
            <person name="Harris D.E."/>
            <person name="Hidalgo J."/>
            <person name="Hodgson G."/>
            <person name="Holroyd S."/>
            <person name="Hornsby T."/>
            <person name="Howarth S."/>
            <person name="Huckle E.J."/>
            <person name="Hunt S."/>
            <person name="Jagels K."/>
            <person name="James K.D."/>
            <person name="Jones L."/>
            <person name="Jones M."/>
            <person name="Leather S."/>
            <person name="McDonald S."/>
            <person name="McLean J."/>
            <person name="Mooney P."/>
            <person name="Moule S."/>
            <person name="Mungall K.L."/>
            <person name="Murphy L.D."/>
            <person name="Niblett D."/>
            <person name="Odell C."/>
            <person name="Oliver K."/>
            <person name="O'Neil S."/>
            <person name="Pearson D."/>
            <person name="Quail M.A."/>
            <person name="Rabbinowitsch E."/>
            <person name="Rutherford K.M."/>
            <person name="Rutter S."/>
            <person name="Saunders D."/>
            <person name="Seeger K."/>
            <person name="Sharp S."/>
            <person name="Skelton J."/>
            <person name="Simmonds M.N."/>
            <person name="Squares R."/>
            <person name="Squares S."/>
            <person name="Stevens K."/>
            <person name="Taylor K."/>
            <person name="Taylor R.G."/>
            <person name="Tivey A."/>
            <person name="Walsh S.V."/>
            <person name="Warren T."/>
            <person name="Whitehead S."/>
            <person name="Woodward J.R."/>
            <person name="Volckaert G."/>
            <person name="Aert R."/>
            <person name="Robben J."/>
            <person name="Grymonprez B."/>
            <person name="Weltjens I."/>
            <person name="Vanstreels E."/>
            <person name="Rieger M."/>
            <person name="Schaefer M."/>
            <person name="Mueller-Auer S."/>
            <person name="Gabel C."/>
            <person name="Fuchs M."/>
            <person name="Duesterhoeft A."/>
            <person name="Fritzc C."/>
            <person name="Holzer E."/>
            <person name="Moestl D."/>
            <person name="Hilbert H."/>
            <person name="Borzym K."/>
            <person name="Langer I."/>
            <person name="Beck A."/>
            <person name="Lehrach H."/>
            <person name="Reinhardt R."/>
            <person name="Pohl T.M."/>
            <person name="Eger P."/>
            <person name="Zimmermann W."/>
            <person name="Wedler H."/>
            <person name="Wambutt R."/>
            <person name="Purnelle B."/>
            <person name="Goffeau A."/>
            <person name="Cadieu E."/>
            <person name="Dreano S."/>
            <person name="Gloux S."/>
            <person name="Lelaure V."/>
            <person name="Mottier S."/>
            <person name="Galibert F."/>
            <person name="Aves S.J."/>
            <person name="Xiang Z."/>
            <person name="Hunt C."/>
            <person name="Moore K."/>
            <person name="Hurst S.M."/>
            <person name="Lucas M."/>
            <person name="Rochet M."/>
            <person name="Gaillardin C."/>
            <person name="Tallada V.A."/>
            <person name="Garzon A."/>
            <person name="Thode G."/>
            <person name="Daga R.R."/>
            <person name="Cruzado L."/>
            <person name="Jimenez J."/>
            <person name="Sanchez M."/>
            <person name="del Rey F."/>
            <person name="Benito J."/>
            <person name="Dominguez A."/>
            <person name="Revuelta J.L."/>
            <person name="Moreno S."/>
            <person name="Armstrong J."/>
            <person name="Forsburg S.L."/>
            <person name="Cerutti L."/>
            <person name="Lowe T."/>
            <person name="McCombie W.R."/>
            <person name="Paulsen I."/>
            <person name="Potashkin J."/>
            <person name="Shpakovski G.V."/>
            <person name="Ussery D."/>
            <person name="Barrell B.G."/>
            <person name="Nurse P."/>
        </authorList>
    </citation>
    <scope>NUCLEOTIDE SEQUENCE [LARGE SCALE GENOMIC DNA]</scope>
    <source>
        <strain>972 / ATCC 24843</strain>
    </source>
</reference>
<reference key="2">
    <citation type="journal article" date="2006" name="Nat. Biotechnol.">
        <title>ORFeome cloning and global analysis of protein localization in the fission yeast Schizosaccharomyces pombe.</title>
        <authorList>
            <person name="Matsuyama A."/>
            <person name="Arai R."/>
            <person name="Yashiroda Y."/>
            <person name="Shirai A."/>
            <person name="Kamata A."/>
            <person name="Sekido S."/>
            <person name="Kobayashi Y."/>
            <person name="Hashimoto A."/>
            <person name="Hamamoto M."/>
            <person name="Hiraoka Y."/>
            <person name="Horinouchi S."/>
            <person name="Yoshida M."/>
        </authorList>
    </citation>
    <scope>SUBCELLULAR LOCATION [LARGE SCALE ANALYSIS]</scope>
</reference>
<gene>
    <name evidence="1" type="primary">rtp1</name>
    <name evidence="5" type="ORF">SPBC20F10.08c</name>
</gene>
<keyword id="KW-0963">Cytoplasm</keyword>
<keyword id="KW-0539">Nucleus</keyword>
<keyword id="KW-1185">Reference proteome</keyword>
<keyword id="KW-0677">Repeat</keyword>
<accession>O42977</accession>
<proteinExistence type="inferred from homology"/>
<organism>
    <name type="scientific">Schizosaccharomyces pombe (strain 972 / ATCC 24843)</name>
    <name type="common">Fission yeast</name>
    <dbReference type="NCBI Taxonomy" id="284812"/>
    <lineage>
        <taxon>Eukaryota</taxon>
        <taxon>Fungi</taxon>
        <taxon>Dikarya</taxon>
        <taxon>Ascomycota</taxon>
        <taxon>Taphrinomycotina</taxon>
        <taxon>Schizosaccharomycetes</taxon>
        <taxon>Schizosaccharomycetales</taxon>
        <taxon>Schizosaccharomycetaceae</taxon>
        <taxon>Schizosaccharomyces</taxon>
    </lineage>
</organism>
<dbReference type="EMBL" id="CU329671">
    <property type="protein sequence ID" value="CAA16848.1"/>
    <property type="molecule type" value="Genomic_DNA"/>
</dbReference>
<dbReference type="PIR" id="T39879">
    <property type="entry name" value="T39879"/>
</dbReference>
<dbReference type="RefSeq" id="NP_596372.1">
    <property type="nucleotide sequence ID" value="NM_001022293.2"/>
</dbReference>
<dbReference type="iPTMnet" id="O42977"/>
<dbReference type="PaxDb" id="4896-SPBC20F10.08c.1"/>
<dbReference type="EnsemblFungi" id="SPBC20F10.08c.1">
    <property type="protein sequence ID" value="SPBC20F10.08c.1:pep"/>
    <property type="gene ID" value="SPBC20F10.08c"/>
</dbReference>
<dbReference type="GeneID" id="2540770"/>
<dbReference type="KEGG" id="spo:2540770"/>
<dbReference type="PomBase" id="SPBC20F10.08c">
    <property type="gene designation" value="rtp1"/>
</dbReference>
<dbReference type="VEuPathDB" id="FungiDB:SPBC20F10.08c"/>
<dbReference type="eggNOG" id="KOG4653">
    <property type="taxonomic scope" value="Eukaryota"/>
</dbReference>
<dbReference type="HOGENOM" id="CLU_363756_0_0_1"/>
<dbReference type="InParanoid" id="O42977"/>
<dbReference type="OMA" id="YVHLNVI"/>
<dbReference type="PRO" id="PR:O42977"/>
<dbReference type="Proteomes" id="UP000002485">
    <property type="component" value="Chromosome II"/>
</dbReference>
<dbReference type="GO" id="GO:0005829">
    <property type="term" value="C:cytosol"/>
    <property type="evidence" value="ECO:0007005"/>
    <property type="project" value="PomBase"/>
</dbReference>
<dbReference type="GO" id="GO:0005634">
    <property type="term" value="C:nucleus"/>
    <property type="evidence" value="ECO:0007005"/>
    <property type="project" value="PomBase"/>
</dbReference>
<dbReference type="GO" id="GO:0006606">
    <property type="term" value="P:protein import into nucleus"/>
    <property type="evidence" value="ECO:0000266"/>
    <property type="project" value="PomBase"/>
</dbReference>
<dbReference type="GO" id="GO:0009306">
    <property type="term" value="P:protein secretion"/>
    <property type="evidence" value="ECO:0000318"/>
    <property type="project" value="GO_Central"/>
</dbReference>
<dbReference type="Gene3D" id="1.25.10.10">
    <property type="entry name" value="Leucine-rich Repeat Variant"/>
    <property type="match status" value="1"/>
</dbReference>
<dbReference type="InterPro" id="IPR011989">
    <property type="entry name" value="ARM-like"/>
</dbReference>
<dbReference type="InterPro" id="IPR016024">
    <property type="entry name" value="ARM-type_fold"/>
</dbReference>
<dbReference type="InterPro" id="IPR019451">
    <property type="entry name" value="Rtp1_C1"/>
</dbReference>
<dbReference type="InterPro" id="IPR039600">
    <property type="entry name" value="TANGO6/Rtp1"/>
</dbReference>
<dbReference type="PANTHER" id="PTHR20959">
    <property type="entry name" value="TRANSPORT AND GOLGI ORGANIZATION PROTEIN 6 FAMILY MEMBER"/>
    <property type="match status" value="1"/>
</dbReference>
<dbReference type="PANTHER" id="PTHR20959:SF1">
    <property type="entry name" value="TRANSPORT AND GOLGI ORGANIZATION PROTEIN 6 HOMOLOG"/>
    <property type="match status" value="1"/>
</dbReference>
<dbReference type="Pfam" id="PF10363">
    <property type="entry name" value="RTP1_C1"/>
    <property type="match status" value="1"/>
</dbReference>
<dbReference type="SUPFAM" id="SSF48371">
    <property type="entry name" value="ARM repeat"/>
    <property type="match status" value="1"/>
</dbReference>